<keyword id="KW-0238">DNA-binding</keyword>
<keyword id="KW-1185">Reference proteome</keyword>
<keyword id="KW-0678">Repressor</keyword>
<keyword id="KW-0346">Stress response</keyword>
<keyword id="KW-1277">Toxin-antitoxin system</keyword>
<keyword id="KW-0804">Transcription</keyword>
<keyword id="KW-0805">Transcription regulation</keyword>
<name>HICB1_PHOLL</name>
<accession>Q7N1I3</accession>
<gene>
    <name type="primary">hicB1</name>
    <name type="ordered locus">plu3491</name>
</gene>
<feature type="chain" id="PRO_0000404520" description="Antitoxin HicB 1">
    <location>
        <begin position="1"/>
        <end position="155"/>
    </location>
</feature>
<feature type="domain" description="HTH cro/C1-type" evidence="2">
    <location>
        <begin position="99"/>
        <end position="153"/>
    </location>
</feature>
<feature type="DNA-binding region" description="H-T-H motif" evidence="2">
    <location>
        <begin position="110"/>
        <end position="129"/>
    </location>
</feature>
<organism>
    <name type="scientific">Photorhabdus laumondii subsp. laumondii (strain DSM 15139 / CIP 105565 / TT01)</name>
    <name type="common">Photorhabdus luminescens subsp. laumondii</name>
    <dbReference type="NCBI Taxonomy" id="243265"/>
    <lineage>
        <taxon>Bacteria</taxon>
        <taxon>Pseudomonadati</taxon>
        <taxon>Pseudomonadota</taxon>
        <taxon>Gammaproteobacteria</taxon>
        <taxon>Enterobacterales</taxon>
        <taxon>Morganellaceae</taxon>
        <taxon>Photorhabdus</taxon>
    </lineage>
</organism>
<reference key="1">
    <citation type="journal article" date="2003" name="Nat. Biotechnol.">
        <title>The genome sequence of the entomopathogenic bacterium Photorhabdus luminescens.</title>
        <authorList>
            <person name="Duchaud E."/>
            <person name="Rusniok C."/>
            <person name="Frangeul L."/>
            <person name="Buchrieser C."/>
            <person name="Givaudan A."/>
            <person name="Taourit S."/>
            <person name="Bocs S."/>
            <person name="Boursaux-Eude C."/>
            <person name="Chandler M."/>
            <person name="Charles J.-F."/>
            <person name="Dassa E."/>
            <person name="Derose R."/>
            <person name="Derzelle S."/>
            <person name="Freyssinet G."/>
            <person name="Gaudriault S."/>
            <person name="Medigue C."/>
            <person name="Lanois A."/>
            <person name="Powell K."/>
            <person name="Siguier P."/>
            <person name="Vincent R."/>
            <person name="Wingate V."/>
            <person name="Zouine M."/>
            <person name="Glaser P."/>
            <person name="Boemare N."/>
            <person name="Danchin A."/>
            <person name="Kunst F."/>
        </authorList>
    </citation>
    <scope>NUCLEOTIDE SEQUENCE [LARGE SCALE GENOMIC DNA]</scope>
    <source>
        <strain>DSM 15139 / CIP 105565 / TT01</strain>
    </source>
</reference>
<dbReference type="EMBL" id="BX571870">
    <property type="protein sequence ID" value="CAE15864.1"/>
    <property type="molecule type" value="Genomic_DNA"/>
</dbReference>
<dbReference type="SMR" id="Q7N1I3"/>
<dbReference type="STRING" id="243265.plu3491"/>
<dbReference type="KEGG" id="plu:plu3491"/>
<dbReference type="eggNOG" id="COG1598">
    <property type="taxonomic scope" value="Bacteria"/>
</dbReference>
<dbReference type="HOGENOM" id="CLU_140890_2_0_6"/>
<dbReference type="Proteomes" id="UP000002514">
    <property type="component" value="Chromosome"/>
</dbReference>
<dbReference type="GO" id="GO:0003677">
    <property type="term" value="F:DNA binding"/>
    <property type="evidence" value="ECO:0007669"/>
    <property type="project" value="UniProtKB-KW"/>
</dbReference>
<dbReference type="CDD" id="cd00093">
    <property type="entry name" value="HTH_XRE"/>
    <property type="match status" value="1"/>
</dbReference>
<dbReference type="Gene3D" id="3.30.160.250">
    <property type="match status" value="1"/>
</dbReference>
<dbReference type="Gene3D" id="1.10.260.40">
    <property type="entry name" value="lambda repressor-like DNA-binding domains"/>
    <property type="match status" value="1"/>
</dbReference>
<dbReference type="InterPro" id="IPR001387">
    <property type="entry name" value="Cro/C1-type_HTH"/>
</dbReference>
<dbReference type="InterPro" id="IPR031807">
    <property type="entry name" value="HicB-like"/>
</dbReference>
<dbReference type="InterPro" id="IPR010982">
    <property type="entry name" value="Lambda_DNA-bd_dom_sf"/>
</dbReference>
<dbReference type="InterPro" id="IPR051404">
    <property type="entry name" value="TA_system_antitoxin"/>
</dbReference>
<dbReference type="InterPro" id="IPR035069">
    <property type="entry name" value="TTHA1013/TTHA0281-like"/>
</dbReference>
<dbReference type="PANTHER" id="PTHR34504">
    <property type="entry name" value="ANTITOXIN HICB"/>
    <property type="match status" value="1"/>
</dbReference>
<dbReference type="PANTHER" id="PTHR34504:SF4">
    <property type="entry name" value="ANTITOXIN HICB"/>
    <property type="match status" value="1"/>
</dbReference>
<dbReference type="Pfam" id="PF15919">
    <property type="entry name" value="HicB_lk_antitox"/>
    <property type="match status" value="1"/>
</dbReference>
<dbReference type="SUPFAM" id="SSF47413">
    <property type="entry name" value="lambda repressor-like DNA-binding domains"/>
    <property type="match status" value="1"/>
</dbReference>
<dbReference type="SUPFAM" id="SSF143100">
    <property type="entry name" value="TTHA1013/TTHA0281-like"/>
    <property type="match status" value="1"/>
</dbReference>
<dbReference type="PROSITE" id="PS50943">
    <property type="entry name" value="HTH_CROC1"/>
    <property type="match status" value="1"/>
</dbReference>
<evidence type="ECO:0000250" key="1"/>
<evidence type="ECO:0000255" key="2">
    <source>
        <dbReference type="PROSITE-ProRule" id="PRU00257"/>
    </source>
</evidence>
<evidence type="ECO:0000305" key="3"/>
<protein>
    <recommendedName>
        <fullName>Antitoxin HicB 1</fullName>
    </recommendedName>
</protein>
<comment type="function">
    <text evidence="1">Antitoxin component of a type II toxin-antitoxin (TA) system. Functions as an mRNA interferase antitoxin preventing effects of the HicA 1 toxin (By similarity).</text>
</comment>
<comment type="subunit">
    <text evidence="1">Probably forms a complex with the probable mRNA interferase HicA1 (its cognate toxin); when complexed with HicA 1 inhibits the toxin activity.</text>
</comment>
<comment type="similarity">
    <text evidence="3">Belongs to the HicB antitoxin family.</text>
</comment>
<sequence>MIKTRLARGGFSHRFIIKNMRYPVTLEPVEEGGYFVSFPDIPEALTQGDTREEALEMALDALITAFEFYFEDNEKIPLPGPVGQDYVDVPLSVASKVLMLNAFLDSKLTQIELANRMGVKKQEVTRIFDLRHSTKIDTVGKVASAIGHQLTLSIE</sequence>
<proteinExistence type="inferred from homology"/>